<comment type="function">
    <text evidence="1">Bidirectionally degrades single-stranded DNA into large acid-insoluble oligonucleotides, which are then degraded further into small acid-soluble oligonucleotides.</text>
</comment>
<comment type="catalytic activity">
    <reaction evidence="1">
        <text>Exonucleolytic cleavage in either 5'- to 3'- or 3'- to 5'-direction to yield nucleoside 5'-phosphates.</text>
        <dbReference type="EC" id="3.1.11.6"/>
    </reaction>
</comment>
<comment type="subunit">
    <text evidence="1">Heterooligomer composed of large and small subunits.</text>
</comment>
<comment type="subcellular location">
    <subcellularLocation>
        <location evidence="1">Cytoplasm</location>
    </subcellularLocation>
</comment>
<comment type="similarity">
    <text evidence="1">Belongs to the XseA family.</text>
</comment>
<feature type="chain" id="PRO_1000122102" description="Exodeoxyribonuclease 7 large subunit">
    <location>
        <begin position="1"/>
        <end position="445"/>
    </location>
</feature>
<accession>B2SHP3</accession>
<evidence type="ECO:0000255" key="1">
    <source>
        <dbReference type="HAMAP-Rule" id="MF_00378"/>
    </source>
</evidence>
<proteinExistence type="inferred from homology"/>
<protein>
    <recommendedName>
        <fullName evidence="1">Exodeoxyribonuclease 7 large subunit</fullName>
        <ecNumber evidence="1">3.1.11.6</ecNumber>
    </recommendedName>
    <alternativeName>
        <fullName evidence="1">Exodeoxyribonuclease VII large subunit</fullName>
        <shortName evidence="1">Exonuclease VII large subunit</shortName>
    </alternativeName>
</protein>
<keyword id="KW-0963">Cytoplasm</keyword>
<keyword id="KW-0269">Exonuclease</keyword>
<keyword id="KW-0378">Hydrolase</keyword>
<keyword id="KW-0540">Nuclease</keyword>
<reference key="1">
    <citation type="journal article" date="2008" name="BMC Genomics">
        <title>Genome sequence and rapid evolution of the rice pathogen Xanthomonas oryzae pv. oryzae PXO99A.</title>
        <authorList>
            <person name="Salzberg S.L."/>
            <person name="Sommer D.D."/>
            <person name="Schatz M.C."/>
            <person name="Phillippy A.M."/>
            <person name="Rabinowicz P.D."/>
            <person name="Tsuge S."/>
            <person name="Furutani A."/>
            <person name="Ochiai H."/>
            <person name="Delcher A.L."/>
            <person name="Kelley D."/>
            <person name="Madupu R."/>
            <person name="Puiu D."/>
            <person name="Radune D."/>
            <person name="Shumway M."/>
            <person name="Trapnell C."/>
            <person name="Aparna G."/>
            <person name="Jha G."/>
            <person name="Pandey A."/>
            <person name="Patil P.B."/>
            <person name="Ishihara H."/>
            <person name="Meyer D.F."/>
            <person name="Szurek B."/>
            <person name="Verdier V."/>
            <person name="Koebnik R."/>
            <person name="Dow J.M."/>
            <person name="Ryan R.P."/>
            <person name="Hirata H."/>
            <person name="Tsuyumu S."/>
            <person name="Won Lee S."/>
            <person name="Seo Y.-S."/>
            <person name="Sriariyanum M."/>
            <person name="Ronald P.C."/>
            <person name="Sonti R.V."/>
            <person name="Van Sluys M.-A."/>
            <person name="Leach J.E."/>
            <person name="White F.F."/>
            <person name="Bogdanove A.J."/>
        </authorList>
    </citation>
    <scope>NUCLEOTIDE SEQUENCE [LARGE SCALE GENOMIC DNA]</scope>
    <source>
        <strain>PXO99A</strain>
    </source>
</reference>
<organism>
    <name type="scientific">Xanthomonas oryzae pv. oryzae (strain PXO99A)</name>
    <dbReference type="NCBI Taxonomy" id="360094"/>
    <lineage>
        <taxon>Bacteria</taxon>
        <taxon>Pseudomonadati</taxon>
        <taxon>Pseudomonadota</taxon>
        <taxon>Gammaproteobacteria</taxon>
        <taxon>Lysobacterales</taxon>
        <taxon>Lysobacteraceae</taxon>
        <taxon>Xanthomonas</taxon>
    </lineage>
</organism>
<sequence length="445" mass="49250">MAERNEQILTPSQLNALARDLLEGSFPLVWVEAELSSVTRPSSGHLYFTLKDARAQIRCAMFKPKSTWLKFQPREGLRVLARGRLTLYEARGDYQLVLDHMEEAGEGALRRAFDALRARLAAEGLFDAERKQLLPAHVQRLAVITSPSGAAVRDVLSVLARRFPLLEVDLLPSLVQGDSAAAQITSLLQRADASGRYDVILITRGGGSLEDLWAFNDERLARAIAAAQTPVVSAVGHETDFSLSDFVADVRAPTPSVAAELLVPDQRELVPRVRRAQARMTQLQQHALGNAMQRADRLALRLRAHSPQARLQLLHRRQEEAGRQLGARMTQVLERLQARVQRGHAQVQSHNPQRHLAGLQQRLRALHPQAAMQRRLQHDQLQLRSIARSLEAVNPLATVARGYAIVTRPADGSVVRSAAEVAAGERLRAQLADGSIEVRVEPGER</sequence>
<gene>
    <name evidence="1" type="primary">xseA</name>
    <name type="ordered locus">PXO_00415</name>
</gene>
<dbReference type="EC" id="3.1.11.6" evidence="1"/>
<dbReference type="EMBL" id="CP000967">
    <property type="protein sequence ID" value="ACD58553.1"/>
    <property type="molecule type" value="Genomic_DNA"/>
</dbReference>
<dbReference type="RefSeq" id="WP_012444699.1">
    <property type="nucleotide sequence ID" value="NC_010717.2"/>
</dbReference>
<dbReference type="SMR" id="B2SHP3"/>
<dbReference type="KEGG" id="xop:PXO_00415"/>
<dbReference type="eggNOG" id="COG1570">
    <property type="taxonomic scope" value="Bacteria"/>
</dbReference>
<dbReference type="HOGENOM" id="CLU_023625_3_1_6"/>
<dbReference type="Proteomes" id="UP000001740">
    <property type="component" value="Chromosome"/>
</dbReference>
<dbReference type="GO" id="GO:0005737">
    <property type="term" value="C:cytoplasm"/>
    <property type="evidence" value="ECO:0007669"/>
    <property type="project" value="UniProtKB-SubCell"/>
</dbReference>
<dbReference type="GO" id="GO:0009318">
    <property type="term" value="C:exodeoxyribonuclease VII complex"/>
    <property type="evidence" value="ECO:0007669"/>
    <property type="project" value="InterPro"/>
</dbReference>
<dbReference type="GO" id="GO:0008855">
    <property type="term" value="F:exodeoxyribonuclease VII activity"/>
    <property type="evidence" value="ECO:0007669"/>
    <property type="project" value="UniProtKB-UniRule"/>
</dbReference>
<dbReference type="GO" id="GO:0003676">
    <property type="term" value="F:nucleic acid binding"/>
    <property type="evidence" value="ECO:0007669"/>
    <property type="project" value="InterPro"/>
</dbReference>
<dbReference type="GO" id="GO:0006308">
    <property type="term" value="P:DNA catabolic process"/>
    <property type="evidence" value="ECO:0007669"/>
    <property type="project" value="UniProtKB-UniRule"/>
</dbReference>
<dbReference type="CDD" id="cd04489">
    <property type="entry name" value="ExoVII_LU_OBF"/>
    <property type="match status" value="1"/>
</dbReference>
<dbReference type="HAMAP" id="MF_00378">
    <property type="entry name" value="Exonuc_7_L"/>
    <property type="match status" value="1"/>
</dbReference>
<dbReference type="InterPro" id="IPR003753">
    <property type="entry name" value="Exonuc_VII_L"/>
</dbReference>
<dbReference type="InterPro" id="IPR020579">
    <property type="entry name" value="Exonuc_VII_lsu_C"/>
</dbReference>
<dbReference type="InterPro" id="IPR025824">
    <property type="entry name" value="OB-fold_nuc-bd_dom"/>
</dbReference>
<dbReference type="NCBIfam" id="TIGR00237">
    <property type="entry name" value="xseA"/>
    <property type="match status" value="1"/>
</dbReference>
<dbReference type="PANTHER" id="PTHR30008">
    <property type="entry name" value="EXODEOXYRIBONUCLEASE 7 LARGE SUBUNIT"/>
    <property type="match status" value="1"/>
</dbReference>
<dbReference type="PANTHER" id="PTHR30008:SF0">
    <property type="entry name" value="EXODEOXYRIBONUCLEASE 7 LARGE SUBUNIT"/>
    <property type="match status" value="1"/>
</dbReference>
<dbReference type="Pfam" id="PF02601">
    <property type="entry name" value="Exonuc_VII_L"/>
    <property type="match status" value="1"/>
</dbReference>
<dbReference type="Pfam" id="PF13742">
    <property type="entry name" value="tRNA_anti_2"/>
    <property type="match status" value="1"/>
</dbReference>
<name>EX7L_XANOP</name>